<sequence>MRLWRSPLLLLVVVVELFSWADALTRFISADSLSTCMTDSQLSASKLYASYFPDNQSVAFDISIQSLVSTNVSIDVDISAYGIEIKKVIDPCDMEISGFCPMQTGNIALSGSHTLTGEALSILDSIPSIAYTVPDLDAVVTINIYESDTNTQLACVRTTVQNGRSVYHRAVYWVMCMVIGIPLLIFLLISPVLQTPALWEIVETMITLFQFAQIQALYSMMATSLPAIIYSWGRNFMWSMGIIRIGFMQDVFTWYVKSTGGTPSTLVDLGIHANVALAKRGIDLGSLAKRATTTVTTSTSDSITLRGIKRISYMMGIETTNFFATGFSFFIILLFFSLLVAMASRFIVEMVLLASRNQALKKQRIRLYWKSISKGFFYRVIFVGFTQMSVLSMWEIYTRDSSALAFLSMYVIVDMAVLLCYAFVRTIQIIRKTGPYSHPDVLYNLYSDTQHLMRWGFMYVQLDVRFFYFTFPLLLITLVRSMFIGFGQGSPKVQGCAMFGISVVVFALMVILRPYATKHMNTLHIGVALMNLISGSFILVMCQAFYVEELARQVIGIIFFALNAITMLLLILGIFIRTLIVLFRKSGHGTYYRILDDQSEKATSYNKSIKDMSSSDMAFSDPAYSGTTLRSSVDLNTPEYPFSNRNDSDSTFTNNKYVSPWDAIEEASYANLRGNTDVEQPFMESDYTRISENNNNAERRRKPLPNNAFR</sequence>
<evidence type="ECO:0000255" key="1"/>
<evidence type="ECO:0000256" key="2">
    <source>
        <dbReference type="SAM" id="MobiDB-lite"/>
    </source>
</evidence>
<evidence type="ECO:0000269" key="3">
    <source>
    </source>
</evidence>
<evidence type="ECO:0000269" key="4">
    <source>
    </source>
</evidence>
<evidence type="ECO:0000305" key="5"/>
<proteinExistence type="evidence at protein level"/>
<feature type="signal peptide" evidence="1">
    <location>
        <begin position="1"/>
        <end position="23"/>
    </location>
</feature>
<feature type="chain" id="PRO_0000045821" description="TRP-like ion channel pkd2">
    <location>
        <begin position="24"/>
        <end position="710"/>
    </location>
</feature>
<feature type="transmembrane region" description="Helical" evidence="1">
    <location>
        <begin position="173"/>
        <end position="193"/>
    </location>
</feature>
<feature type="transmembrane region" description="Helical" evidence="1">
    <location>
        <begin position="197"/>
        <end position="217"/>
    </location>
</feature>
<feature type="transmembrane region" description="Helical" evidence="1">
    <location>
        <begin position="322"/>
        <end position="342"/>
    </location>
</feature>
<feature type="transmembrane region" description="Helical" evidence="1">
    <location>
        <begin position="376"/>
        <end position="396"/>
    </location>
</feature>
<feature type="transmembrane region" description="Helical" evidence="1">
    <location>
        <begin position="404"/>
        <end position="424"/>
    </location>
</feature>
<feature type="transmembrane region" description="Helical" evidence="1">
    <location>
        <begin position="466"/>
        <end position="486"/>
    </location>
</feature>
<feature type="transmembrane region" description="Helical" evidence="1">
    <location>
        <begin position="492"/>
        <end position="512"/>
    </location>
</feature>
<feature type="transmembrane region" description="Helical" evidence="1">
    <location>
        <begin position="525"/>
        <end position="545"/>
    </location>
</feature>
<feature type="transmembrane region" description="Helical" evidence="1">
    <location>
        <begin position="555"/>
        <end position="575"/>
    </location>
</feature>
<feature type="region of interest" description="Disordered" evidence="2">
    <location>
        <begin position="689"/>
        <end position="710"/>
    </location>
</feature>
<feature type="modified residue" description="Phosphoserine" evidence="4">
    <location>
        <position position="599"/>
    </location>
</feature>
<feature type="modified residue" description="Phosphoserine" evidence="4">
    <location>
        <position position="632"/>
    </location>
</feature>
<organism>
    <name type="scientific">Schizosaccharomyces pombe (strain 972 / ATCC 24843)</name>
    <name type="common">Fission yeast</name>
    <dbReference type="NCBI Taxonomy" id="284812"/>
    <lineage>
        <taxon>Eukaryota</taxon>
        <taxon>Fungi</taxon>
        <taxon>Dikarya</taxon>
        <taxon>Ascomycota</taxon>
        <taxon>Taphrinomycotina</taxon>
        <taxon>Schizosaccharomycetes</taxon>
        <taxon>Schizosaccharomycetales</taxon>
        <taxon>Schizosaccharomycetaceae</taxon>
        <taxon>Schizosaccharomyces</taxon>
    </lineage>
</organism>
<name>PKD2_SCHPO</name>
<accession>Q09917</accession>
<keyword id="KW-0106">Calcium</keyword>
<keyword id="KW-0107">Calcium channel</keyword>
<keyword id="KW-0109">Calcium transport</keyword>
<keyword id="KW-1003">Cell membrane</keyword>
<keyword id="KW-0333">Golgi apparatus</keyword>
<keyword id="KW-0407">Ion channel</keyword>
<keyword id="KW-0406">Ion transport</keyword>
<keyword id="KW-0472">Membrane</keyword>
<keyword id="KW-0597">Phosphoprotein</keyword>
<keyword id="KW-1185">Reference proteome</keyword>
<keyword id="KW-0732">Signal</keyword>
<keyword id="KW-0812">Transmembrane</keyword>
<keyword id="KW-1133">Transmembrane helix</keyword>
<keyword id="KW-0813">Transport</keyword>
<reference key="1">
    <citation type="journal article" date="2002" name="Nature">
        <title>The genome sequence of Schizosaccharomyces pombe.</title>
        <authorList>
            <person name="Wood V."/>
            <person name="Gwilliam R."/>
            <person name="Rajandream M.A."/>
            <person name="Lyne M.H."/>
            <person name="Lyne R."/>
            <person name="Stewart A."/>
            <person name="Sgouros J.G."/>
            <person name="Peat N."/>
            <person name="Hayles J."/>
            <person name="Baker S.G."/>
            <person name="Basham D."/>
            <person name="Bowman S."/>
            <person name="Brooks K."/>
            <person name="Brown D."/>
            <person name="Brown S."/>
            <person name="Chillingworth T."/>
            <person name="Churcher C.M."/>
            <person name="Collins M."/>
            <person name="Connor R."/>
            <person name="Cronin A."/>
            <person name="Davis P."/>
            <person name="Feltwell T."/>
            <person name="Fraser A."/>
            <person name="Gentles S."/>
            <person name="Goble A."/>
            <person name="Hamlin N."/>
            <person name="Harris D.E."/>
            <person name="Hidalgo J."/>
            <person name="Hodgson G."/>
            <person name="Holroyd S."/>
            <person name="Hornsby T."/>
            <person name="Howarth S."/>
            <person name="Huckle E.J."/>
            <person name="Hunt S."/>
            <person name="Jagels K."/>
            <person name="James K.D."/>
            <person name="Jones L."/>
            <person name="Jones M."/>
            <person name="Leather S."/>
            <person name="McDonald S."/>
            <person name="McLean J."/>
            <person name="Mooney P."/>
            <person name="Moule S."/>
            <person name="Mungall K.L."/>
            <person name="Murphy L.D."/>
            <person name="Niblett D."/>
            <person name="Odell C."/>
            <person name="Oliver K."/>
            <person name="O'Neil S."/>
            <person name="Pearson D."/>
            <person name="Quail M.A."/>
            <person name="Rabbinowitsch E."/>
            <person name="Rutherford K.M."/>
            <person name="Rutter S."/>
            <person name="Saunders D."/>
            <person name="Seeger K."/>
            <person name="Sharp S."/>
            <person name="Skelton J."/>
            <person name="Simmonds M.N."/>
            <person name="Squares R."/>
            <person name="Squares S."/>
            <person name="Stevens K."/>
            <person name="Taylor K."/>
            <person name="Taylor R.G."/>
            <person name="Tivey A."/>
            <person name="Walsh S.V."/>
            <person name="Warren T."/>
            <person name="Whitehead S."/>
            <person name="Woodward J.R."/>
            <person name="Volckaert G."/>
            <person name="Aert R."/>
            <person name="Robben J."/>
            <person name="Grymonprez B."/>
            <person name="Weltjens I."/>
            <person name="Vanstreels E."/>
            <person name="Rieger M."/>
            <person name="Schaefer M."/>
            <person name="Mueller-Auer S."/>
            <person name="Gabel C."/>
            <person name="Fuchs M."/>
            <person name="Duesterhoeft A."/>
            <person name="Fritzc C."/>
            <person name="Holzer E."/>
            <person name="Moestl D."/>
            <person name="Hilbert H."/>
            <person name="Borzym K."/>
            <person name="Langer I."/>
            <person name="Beck A."/>
            <person name="Lehrach H."/>
            <person name="Reinhardt R."/>
            <person name="Pohl T.M."/>
            <person name="Eger P."/>
            <person name="Zimmermann W."/>
            <person name="Wedler H."/>
            <person name="Wambutt R."/>
            <person name="Purnelle B."/>
            <person name="Goffeau A."/>
            <person name="Cadieu E."/>
            <person name="Dreano S."/>
            <person name="Gloux S."/>
            <person name="Lelaure V."/>
            <person name="Mottier S."/>
            <person name="Galibert F."/>
            <person name="Aves S.J."/>
            <person name="Xiang Z."/>
            <person name="Hunt C."/>
            <person name="Moore K."/>
            <person name="Hurst S.M."/>
            <person name="Lucas M."/>
            <person name="Rochet M."/>
            <person name="Gaillardin C."/>
            <person name="Tallada V.A."/>
            <person name="Garzon A."/>
            <person name="Thode G."/>
            <person name="Daga R.R."/>
            <person name="Cruzado L."/>
            <person name="Jimenez J."/>
            <person name="Sanchez M."/>
            <person name="del Rey F."/>
            <person name="Benito J."/>
            <person name="Dominguez A."/>
            <person name="Revuelta J.L."/>
            <person name="Moreno S."/>
            <person name="Armstrong J."/>
            <person name="Forsburg S.L."/>
            <person name="Cerutti L."/>
            <person name="Lowe T."/>
            <person name="McCombie W.R."/>
            <person name="Paulsen I."/>
            <person name="Potashkin J."/>
            <person name="Shpakovski G.V."/>
            <person name="Ussery D."/>
            <person name="Barrell B.G."/>
            <person name="Nurse P."/>
        </authorList>
    </citation>
    <scope>NUCLEOTIDE SEQUENCE [LARGE SCALE GENOMIC DNA]</scope>
    <source>
        <strain>972 / ATCC 24843</strain>
    </source>
</reference>
<reference key="2">
    <citation type="journal article" date="2005" name="Biochem. J.">
        <title>A microbial TRP-like polycystic-kidney-disease-related ion channel gene.</title>
        <authorList>
            <person name="Palmer C.P."/>
            <person name="Aydar E."/>
            <person name="Djamgoz M.B."/>
        </authorList>
    </citation>
    <scope>FUNCTION</scope>
    <scope>INTERACTION WITH RHO1</scope>
    <scope>SUBCELLULAR LOCATION</scope>
</reference>
<reference key="3">
    <citation type="journal article" date="2008" name="J. Proteome Res.">
        <title>Phosphoproteome analysis of fission yeast.</title>
        <authorList>
            <person name="Wilson-Grady J.T."/>
            <person name="Villen J."/>
            <person name="Gygi S.P."/>
        </authorList>
    </citation>
    <scope>PHOSPHORYLATION [LARGE SCALE ANALYSIS] AT SER-599 AND SER-632</scope>
    <scope>IDENTIFICATION BY MASS SPECTROMETRY</scope>
</reference>
<gene>
    <name type="primary">pkd2</name>
    <name type="ORF">SPAC1F7.03</name>
</gene>
<protein>
    <recommendedName>
        <fullName>TRP-like ion channel pkd2</fullName>
    </recommendedName>
    <alternativeName>
        <fullName>Polycystic kidney disease-related ion channel 2</fullName>
    </alternativeName>
</protein>
<dbReference type="EMBL" id="CU329670">
    <property type="protein sequence ID" value="CAA91950.1"/>
    <property type="molecule type" value="Genomic_DNA"/>
</dbReference>
<dbReference type="PIR" id="S62575">
    <property type="entry name" value="S62575"/>
</dbReference>
<dbReference type="RefSeq" id="NP_594489.1">
    <property type="nucleotide sequence ID" value="NM_001019918.2"/>
</dbReference>
<dbReference type="BioGRID" id="278110">
    <property type="interactions" value="15"/>
</dbReference>
<dbReference type="FunCoup" id="Q09917">
    <property type="interactions" value="18"/>
</dbReference>
<dbReference type="STRING" id="284812.Q09917"/>
<dbReference type="TCDB" id="1.A.131.1.2">
    <property type="family name" value="the putative trp-like channel (p-trpl-ch) family"/>
</dbReference>
<dbReference type="iPTMnet" id="Q09917"/>
<dbReference type="PaxDb" id="4896-SPAC1F7.03.1"/>
<dbReference type="EnsemblFungi" id="SPAC1F7.03.1">
    <property type="protein sequence ID" value="SPAC1F7.03.1:pep"/>
    <property type="gene ID" value="SPAC1F7.03"/>
</dbReference>
<dbReference type="GeneID" id="2541613"/>
<dbReference type="KEGG" id="spo:2541613"/>
<dbReference type="PomBase" id="SPAC1F7.03">
    <property type="gene designation" value="pkd2"/>
</dbReference>
<dbReference type="VEuPathDB" id="FungiDB:SPAC1F7.03"/>
<dbReference type="eggNOG" id="ENOG502QSVZ">
    <property type="taxonomic scope" value="Eukaryota"/>
</dbReference>
<dbReference type="HOGENOM" id="CLU_010226_1_0_1"/>
<dbReference type="InParanoid" id="Q09917"/>
<dbReference type="OMA" id="FQAQAFI"/>
<dbReference type="PhylomeDB" id="Q09917"/>
<dbReference type="PRO" id="PR:Q09917"/>
<dbReference type="Proteomes" id="UP000002485">
    <property type="component" value="Chromosome I"/>
</dbReference>
<dbReference type="GO" id="GO:0032154">
    <property type="term" value="C:cleavage furrow"/>
    <property type="evidence" value="ECO:0000314"/>
    <property type="project" value="PomBase"/>
</dbReference>
<dbReference type="GO" id="GO:0000935">
    <property type="term" value="C:division septum"/>
    <property type="evidence" value="ECO:0000314"/>
    <property type="project" value="PomBase"/>
</dbReference>
<dbReference type="GO" id="GO:0005783">
    <property type="term" value="C:endoplasmic reticulum"/>
    <property type="evidence" value="ECO:0000314"/>
    <property type="project" value="PomBase"/>
</dbReference>
<dbReference type="GO" id="GO:0000139">
    <property type="term" value="C:Golgi membrane"/>
    <property type="evidence" value="ECO:0000314"/>
    <property type="project" value="PomBase"/>
</dbReference>
<dbReference type="GO" id="GO:0032178">
    <property type="term" value="C:medial membrane band"/>
    <property type="evidence" value="ECO:0000314"/>
    <property type="project" value="PomBase"/>
</dbReference>
<dbReference type="GO" id="GO:0016020">
    <property type="term" value="C:membrane"/>
    <property type="evidence" value="ECO:0000318"/>
    <property type="project" value="GO_Central"/>
</dbReference>
<dbReference type="GO" id="GO:0005886">
    <property type="term" value="C:plasma membrane"/>
    <property type="evidence" value="ECO:0000314"/>
    <property type="project" value="PomBase"/>
</dbReference>
<dbReference type="GO" id="GO:0031520">
    <property type="term" value="C:plasma membrane of cell tip"/>
    <property type="evidence" value="ECO:0000314"/>
    <property type="project" value="PomBase"/>
</dbReference>
<dbReference type="GO" id="GO:0005262">
    <property type="term" value="F:calcium channel activity"/>
    <property type="evidence" value="ECO:0000315"/>
    <property type="project" value="PomBase"/>
</dbReference>
<dbReference type="GO" id="GO:0015275">
    <property type="term" value="F:stretch-activated, monoatomic cation-selective, calcium channel activity"/>
    <property type="evidence" value="ECO:0000269"/>
    <property type="project" value="PomBase"/>
</dbReference>
<dbReference type="GO" id="GO:0097720">
    <property type="term" value="P:calcineurin-mediated signaling"/>
    <property type="evidence" value="ECO:0000314"/>
    <property type="project" value="PomBase"/>
</dbReference>
<dbReference type="GO" id="GO:0098703">
    <property type="term" value="P:calcium ion import across plasma membrane"/>
    <property type="evidence" value="ECO:0000314"/>
    <property type="project" value="PomBase"/>
</dbReference>
<dbReference type="GO" id="GO:0019722">
    <property type="term" value="P:calcium-mediated signaling"/>
    <property type="evidence" value="ECO:0000315"/>
    <property type="project" value="PomBase"/>
</dbReference>
<dbReference type="GO" id="GO:0071474">
    <property type="term" value="P:cellular hyperosmotic response"/>
    <property type="evidence" value="ECO:0000314"/>
    <property type="project" value="PomBase"/>
</dbReference>
<dbReference type="GO" id="GO:0009272">
    <property type="term" value="P:fungal-type cell wall biogenesis"/>
    <property type="evidence" value="ECO:0000318"/>
    <property type="project" value="GO_Central"/>
</dbReference>
<dbReference type="GO" id="GO:0009992">
    <property type="term" value="P:intracellular water homeostasis"/>
    <property type="evidence" value="ECO:0000315"/>
    <property type="project" value="PomBase"/>
</dbReference>
<dbReference type="GO" id="GO:0090334">
    <property type="term" value="P:regulation of cell wall (1-&gt;3)-beta-D-glucan biosynthetic process"/>
    <property type="evidence" value="ECO:0000315"/>
    <property type="project" value="PomBase"/>
</dbReference>
<dbReference type="GO" id="GO:0055085">
    <property type="term" value="P:transmembrane transport"/>
    <property type="evidence" value="ECO:0000318"/>
    <property type="project" value="GO_Central"/>
</dbReference>
<dbReference type="InterPro" id="IPR010308">
    <property type="entry name" value="TRP_C"/>
</dbReference>
<dbReference type="InterPro" id="IPR040241">
    <property type="entry name" value="TRP_Flc/Pkd2-like"/>
</dbReference>
<dbReference type="InterPro" id="IPR032800">
    <property type="entry name" value="TRP_N"/>
</dbReference>
<dbReference type="PANTHER" id="PTHR31145:SF2">
    <property type="entry name" value="FLAVIN CARRIER PROTEIN 2"/>
    <property type="match status" value="1"/>
</dbReference>
<dbReference type="PANTHER" id="PTHR31145">
    <property type="entry name" value="INTEGRAL MEMBRANE PROTEIN (AFU_ORTHOLOGUE AFUA_7G01610)"/>
    <property type="match status" value="1"/>
</dbReference>
<dbReference type="Pfam" id="PF06011">
    <property type="entry name" value="TRP"/>
    <property type="match status" value="1"/>
</dbReference>
<dbReference type="Pfam" id="PF14558">
    <property type="entry name" value="TRP_N"/>
    <property type="match status" value="1"/>
</dbReference>
<dbReference type="SMART" id="SM01320">
    <property type="entry name" value="TRP_N"/>
    <property type="match status" value="1"/>
</dbReference>
<comment type="function">
    <text evidence="3">Acts as a key signaling component in the regulation of cell shape and cell wall synthesis through interaction with GTPase Rho1.</text>
</comment>
<comment type="subunit">
    <text evidence="3">Interacts with rho1.</text>
</comment>
<comment type="subcellular location">
    <subcellularLocation>
        <location evidence="3">Cell membrane</location>
        <topology evidence="3">Multi-pass membrane protein</topology>
    </subcellularLocation>
    <subcellularLocation>
        <location evidence="3">Golgi apparatus membrane</location>
        <topology evidence="3">Multi-pass membrane protein</topology>
    </subcellularLocation>
</comment>
<comment type="similarity">
    <text evidence="5">Belongs to the transient receptor potential (TRP) ion channel family.</text>
</comment>